<name>NEP_I57A1</name>
<protein>
    <recommendedName>
        <fullName evidence="1">Nuclear export protein</fullName>
        <shortName evidence="1">NEP</shortName>
    </recommendedName>
    <alternativeName>
        <fullName evidence="1">Non-structural protein 2</fullName>
        <shortName evidence="1">NS2</shortName>
    </alternativeName>
</protein>
<gene>
    <name evidence="1" type="primary">NS</name>
</gene>
<reference key="1">
    <citation type="journal article" date="1992" name="Virology">
        <title>Sequence changes in the live attenuated, cold-adapted variants of influenza A/Leningrad/134/57 (H2N2) virus.</title>
        <authorList>
            <person name="Klimov A.I."/>
            <person name="Cox N.J."/>
            <person name="Yotov W.V."/>
            <person name="Rocha E."/>
            <person name="Alexandrova G.I."/>
            <person name="Kendal A.P."/>
        </authorList>
    </citation>
    <scope>NUCLEOTIDE SEQUENCE</scope>
</reference>
<feature type="chain" id="PRO_0000078992" description="Nuclear export protein">
    <location>
        <begin position="1"/>
        <end position="121"/>
    </location>
</feature>
<feature type="short sequence motif" description="Nuclear export signal" evidence="1">
    <location>
        <begin position="12"/>
        <end position="21"/>
    </location>
</feature>
<feature type="short sequence motif" description="Nuclear export signal" evidence="1">
    <location>
        <begin position="85"/>
        <end position="94"/>
    </location>
</feature>
<sequence length="121" mass="14351">MDPNTVSSFQDILMRMSKMQLGSSSEDLNGMITQFESLKLYRDSLGEAVMRMGDLHSLQNRNGKWREQLGQKFEEIRWLIEEVRHKLKITENSFEQITFMQALQLLFEVEQEIRTFSFQLI</sequence>
<accession>P69260</accession>
<accession>P21432</accession>
<organism>
    <name type="scientific">Influenza A virus (strain A/Leningrad/134/1957 H2N2)</name>
    <dbReference type="NCBI Taxonomy" id="387163"/>
    <lineage>
        <taxon>Viruses</taxon>
        <taxon>Riboviria</taxon>
        <taxon>Orthornavirae</taxon>
        <taxon>Negarnaviricota</taxon>
        <taxon>Polyploviricotina</taxon>
        <taxon>Insthoviricetes</taxon>
        <taxon>Articulavirales</taxon>
        <taxon>Orthomyxoviridae</taxon>
        <taxon>Alphainfluenzavirus</taxon>
        <taxon>Alphainfluenzavirus influenzae</taxon>
        <taxon>Influenza A virus</taxon>
    </lineage>
</organism>
<organismHost>
    <name type="scientific">Aves</name>
    <dbReference type="NCBI Taxonomy" id="8782"/>
</organismHost>
<organismHost>
    <name type="scientific">Homo sapiens</name>
    <name type="common">Human</name>
    <dbReference type="NCBI Taxonomy" id="9606"/>
</organismHost>
<dbReference type="EMBL" id="M81572">
    <property type="protein sequence ID" value="AAA19198.1"/>
    <property type="molecule type" value="Unassigned_RNA"/>
</dbReference>
<dbReference type="SMR" id="P69260"/>
<dbReference type="GO" id="GO:0042025">
    <property type="term" value="C:host cell nucleus"/>
    <property type="evidence" value="ECO:0007669"/>
    <property type="project" value="UniProtKB-SubCell"/>
</dbReference>
<dbReference type="GO" id="GO:0044423">
    <property type="term" value="C:virion component"/>
    <property type="evidence" value="ECO:0007669"/>
    <property type="project" value="UniProtKB-UniRule"/>
</dbReference>
<dbReference type="GO" id="GO:0039675">
    <property type="term" value="P:exit of virus from host cell nucleus through nuclear pore"/>
    <property type="evidence" value="ECO:0007669"/>
    <property type="project" value="UniProtKB-UniRule"/>
</dbReference>
<dbReference type="Gene3D" id="1.10.287.230">
    <property type="match status" value="1"/>
</dbReference>
<dbReference type="Gene3D" id="1.10.287.10">
    <property type="entry name" value="S15/NS1, RNA-binding"/>
    <property type="match status" value="1"/>
</dbReference>
<dbReference type="HAMAP" id="MF_04067">
    <property type="entry name" value="INFV_NEP"/>
    <property type="match status" value="1"/>
</dbReference>
<dbReference type="InterPro" id="IPR000968">
    <property type="entry name" value="Flu_NS2"/>
</dbReference>
<dbReference type="Pfam" id="PF00601">
    <property type="entry name" value="Flu_NS2"/>
    <property type="match status" value="1"/>
</dbReference>
<dbReference type="SUPFAM" id="SSF101156">
    <property type="entry name" value="Nonstructural protein ns2, Nep, M1-binding domain"/>
    <property type="match status" value="1"/>
</dbReference>
<proteinExistence type="inferred from homology"/>
<evidence type="ECO:0000255" key="1">
    <source>
        <dbReference type="HAMAP-Rule" id="MF_04067"/>
    </source>
</evidence>
<keyword id="KW-0025">Alternative splicing</keyword>
<keyword id="KW-1048">Host nucleus</keyword>
<keyword id="KW-0945">Host-virus interaction</keyword>
<keyword id="KW-0813">Transport</keyword>
<keyword id="KW-0946">Virion</keyword>
<comment type="function">
    <text evidence="1">Mediates the nuclear export of encapsidated genomic RNAs (ribonucleoproteins, RNPs). Acts as an adapter between viral RNPs complexes and the nuclear export machinery of the cell. Possesses no intrinsic RNA-binding activity, but includes a C-terminal M1-binding domain. This domain is believed to allow recognition of RNPs bound to the protein M1. Since protein M1 is not available in large quantities before late stages of infection, such an indirect recognition mechanism probably ensures that genomic RNPs are not exported from the host nucleus until sufficient quantities of viral mRNA and progeny genomic RNA have been synthesized. Furthermore, the RNPs enter the host cytoplasm only when associated with the M1 protein that is necessary to guide them to the plasma membrane. May down-regulate viral RNA synthesis when overproduced.</text>
</comment>
<comment type="subunit">
    <text evidence="1">Interacts with protein M1. May interact with host nucleoporin RAB/HRB and exportin XPO1/CRM1.</text>
</comment>
<comment type="subcellular location">
    <subcellularLocation>
        <location evidence="1">Virion</location>
    </subcellularLocation>
    <subcellularLocation>
        <location evidence="1">Host nucleus</location>
    </subcellularLocation>
</comment>
<comment type="alternative products">
    <event type="alternative splicing"/>
    <isoform>
        <id>P69260-1</id>
        <name>NEP</name>
        <name>NS2</name>
        <sequence type="displayed"/>
    </isoform>
    <isoform>
        <id>P69272-1</id>
        <name>NS1</name>
        <sequence type="external"/>
    </isoform>
</comment>
<comment type="miscellaneous">
    <text>Average number present in a viral particle is estimated to be 130-200 molecules.</text>
</comment>
<comment type="similarity">
    <text evidence="1">Belongs to the influenza viruses NEP family.</text>
</comment>